<protein>
    <recommendedName>
        <fullName evidence="1">Large ribosomal subunit protein uL14c</fullName>
    </recommendedName>
    <alternativeName>
        <fullName evidence="2">50S ribosomal protein L14, organellar chromatophore</fullName>
    </alternativeName>
</protein>
<feature type="chain" id="PRO_0000355907" description="Large ribosomal subunit protein uL14c">
    <location>
        <begin position="1"/>
        <end position="121"/>
    </location>
</feature>
<organism>
    <name type="scientific">Paulinella chromatophora</name>
    <dbReference type="NCBI Taxonomy" id="39717"/>
    <lineage>
        <taxon>Eukaryota</taxon>
        <taxon>Sar</taxon>
        <taxon>Rhizaria</taxon>
        <taxon>Cercozoa</taxon>
        <taxon>Imbricatea</taxon>
        <taxon>Silicofilosea</taxon>
        <taxon>Euglyphida</taxon>
        <taxon>Paulinellidae</taxon>
        <taxon>Paulinella</taxon>
    </lineage>
</organism>
<proteinExistence type="inferred from homology"/>
<sequence>MIQQETFLNVADNSGAKRIQCIRVLGSNRRYAHVGDIIVAAVKDAMPNMSVKKSDVVKAVIVRTKATLRRETGNSIRFDDNAAVIINDDKNPKGTRVFGPVARELRERNFTKIVSLAPEVI</sequence>
<dbReference type="EMBL" id="CP000815">
    <property type="protein sequence ID" value="ACB43017.1"/>
    <property type="molecule type" value="Genomic_DNA"/>
</dbReference>
<dbReference type="RefSeq" id="YP_002049227.1">
    <property type="nucleotide sequence ID" value="NC_011087.1"/>
</dbReference>
<dbReference type="SMR" id="B1X4Z8"/>
<dbReference type="GeneID" id="6481787"/>
<dbReference type="GO" id="GO:0022625">
    <property type="term" value="C:cytosolic large ribosomal subunit"/>
    <property type="evidence" value="ECO:0007669"/>
    <property type="project" value="TreeGrafter"/>
</dbReference>
<dbReference type="GO" id="GO:0070111">
    <property type="term" value="C:organellar chromatophore"/>
    <property type="evidence" value="ECO:0007669"/>
    <property type="project" value="UniProtKB-SubCell"/>
</dbReference>
<dbReference type="GO" id="GO:0009536">
    <property type="term" value="C:plastid"/>
    <property type="evidence" value="ECO:0007669"/>
    <property type="project" value="UniProtKB-KW"/>
</dbReference>
<dbReference type="GO" id="GO:0070180">
    <property type="term" value="F:large ribosomal subunit rRNA binding"/>
    <property type="evidence" value="ECO:0007669"/>
    <property type="project" value="TreeGrafter"/>
</dbReference>
<dbReference type="GO" id="GO:0003735">
    <property type="term" value="F:structural constituent of ribosome"/>
    <property type="evidence" value="ECO:0007669"/>
    <property type="project" value="InterPro"/>
</dbReference>
<dbReference type="GO" id="GO:0006412">
    <property type="term" value="P:translation"/>
    <property type="evidence" value="ECO:0007669"/>
    <property type="project" value="InterPro"/>
</dbReference>
<dbReference type="CDD" id="cd00337">
    <property type="entry name" value="Ribosomal_uL14"/>
    <property type="match status" value="1"/>
</dbReference>
<dbReference type="FunFam" id="2.40.150.20:FF:000001">
    <property type="entry name" value="50S ribosomal protein L14"/>
    <property type="match status" value="1"/>
</dbReference>
<dbReference type="Gene3D" id="2.40.150.20">
    <property type="entry name" value="Ribosomal protein L14"/>
    <property type="match status" value="1"/>
</dbReference>
<dbReference type="HAMAP" id="MF_01367">
    <property type="entry name" value="Ribosomal_uL14"/>
    <property type="match status" value="1"/>
</dbReference>
<dbReference type="InterPro" id="IPR000218">
    <property type="entry name" value="Ribosomal_uL14"/>
</dbReference>
<dbReference type="InterPro" id="IPR005745">
    <property type="entry name" value="Ribosomal_uL14_bac-type"/>
</dbReference>
<dbReference type="InterPro" id="IPR036853">
    <property type="entry name" value="Ribosomal_uL14_sf"/>
</dbReference>
<dbReference type="NCBIfam" id="TIGR01067">
    <property type="entry name" value="rplN_bact"/>
    <property type="match status" value="1"/>
</dbReference>
<dbReference type="PANTHER" id="PTHR11761">
    <property type="entry name" value="50S/60S RIBOSOMAL PROTEIN L14/L23"/>
    <property type="match status" value="1"/>
</dbReference>
<dbReference type="PANTHER" id="PTHR11761:SF3">
    <property type="entry name" value="LARGE RIBOSOMAL SUBUNIT PROTEIN UL14M"/>
    <property type="match status" value="1"/>
</dbReference>
<dbReference type="Pfam" id="PF00238">
    <property type="entry name" value="Ribosomal_L14"/>
    <property type="match status" value="1"/>
</dbReference>
<dbReference type="SMART" id="SM01374">
    <property type="entry name" value="Ribosomal_L14"/>
    <property type="match status" value="1"/>
</dbReference>
<dbReference type="SUPFAM" id="SSF50193">
    <property type="entry name" value="Ribosomal protein L14"/>
    <property type="match status" value="1"/>
</dbReference>
<gene>
    <name evidence="1" type="primary">rpl14</name>
    <name type="ordered locus">PCC_0587</name>
</gene>
<keyword id="KW-0994">Organellar chromatophore</keyword>
<keyword id="KW-0934">Plastid</keyword>
<keyword id="KW-0687">Ribonucleoprotein</keyword>
<keyword id="KW-0689">Ribosomal protein</keyword>
<keyword id="KW-0694">RNA-binding</keyword>
<keyword id="KW-0699">rRNA-binding</keyword>
<name>RK14_PAUCH</name>
<accession>B1X4Z8</accession>
<evidence type="ECO:0000255" key="1">
    <source>
        <dbReference type="HAMAP-Rule" id="MF_01367"/>
    </source>
</evidence>
<evidence type="ECO:0000305" key="2"/>
<geneLocation type="organellar chromatophore"/>
<reference key="1">
    <citation type="journal article" date="2008" name="Curr. Biol.">
        <title>Chromatophore genome sequence of Paulinella sheds light on acquisition of photosynthesis by eukaryotes.</title>
        <authorList>
            <person name="Nowack E.C.M."/>
            <person name="Melkonian M."/>
            <person name="Gloeckner G."/>
        </authorList>
    </citation>
    <scope>NUCLEOTIDE SEQUENCE [LARGE SCALE GENOMIC DNA]</scope>
</reference>
<comment type="function">
    <text evidence="1">Binds to 23S rRNA.</text>
</comment>
<comment type="subunit">
    <text evidence="1">Part of the 50S ribosomal subunit.</text>
</comment>
<comment type="subcellular location">
    <subcellularLocation>
        <location>Plastid</location>
        <location>Organellar chromatophore</location>
    </subcellularLocation>
</comment>
<comment type="similarity">
    <text evidence="1">Belongs to the universal ribosomal protein uL14 family.</text>
</comment>